<protein>
    <recommendedName>
        <fullName evidence="1">Cysteine--tRNA ligase</fullName>
        <ecNumber evidence="1">6.1.1.16</ecNumber>
    </recommendedName>
    <alternativeName>
        <fullName evidence="1">Cysteinyl-tRNA synthetase</fullName>
        <shortName evidence="1">CysRS</shortName>
    </alternativeName>
</protein>
<gene>
    <name evidence="1" type="primary">cysS</name>
    <name type="ordered locus">Mmc1_0415</name>
</gene>
<keyword id="KW-0030">Aminoacyl-tRNA synthetase</keyword>
<keyword id="KW-0067">ATP-binding</keyword>
<keyword id="KW-0963">Cytoplasm</keyword>
<keyword id="KW-0436">Ligase</keyword>
<keyword id="KW-0479">Metal-binding</keyword>
<keyword id="KW-0547">Nucleotide-binding</keyword>
<keyword id="KW-0648">Protein biosynthesis</keyword>
<keyword id="KW-1185">Reference proteome</keyword>
<keyword id="KW-0862">Zinc</keyword>
<name>SYC_MAGMM</name>
<accession>A0L4P8</accession>
<organism>
    <name type="scientific">Magnetococcus marinus (strain ATCC BAA-1437 / JCM 17883 / MC-1)</name>
    <dbReference type="NCBI Taxonomy" id="156889"/>
    <lineage>
        <taxon>Bacteria</taxon>
        <taxon>Pseudomonadati</taxon>
        <taxon>Pseudomonadota</taxon>
        <taxon>Alphaproteobacteria</taxon>
        <taxon>Magnetococcales</taxon>
        <taxon>Magnetococcaceae</taxon>
        <taxon>Magnetococcus</taxon>
    </lineage>
</organism>
<feature type="chain" id="PRO_0000332847" description="Cysteine--tRNA ligase">
    <location>
        <begin position="1"/>
        <end position="490"/>
    </location>
</feature>
<feature type="short sequence motif" description="'HIGH' region">
    <location>
        <begin position="38"/>
        <end position="48"/>
    </location>
</feature>
<feature type="short sequence motif" description="'KMSKS' region">
    <location>
        <begin position="278"/>
        <end position="282"/>
    </location>
</feature>
<feature type="binding site" evidence="1">
    <location>
        <position position="36"/>
    </location>
    <ligand>
        <name>Zn(2+)</name>
        <dbReference type="ChEBI" id="CHEBI:29105"/>
    </ligand>
</feature>
<feature type="binding site" evidence="1">
    <location>
        <position position="216"/>
    </location>
    <ligand>
        <name>Zn(2+)</name>
        <dbReference type="ChEBI" id="CHEBI:29105"/>
    </ligand>
</feature>
<feature type="binding site" evidence="1">
    <location>
        <position position="241"/>
    </location>
    <ligand>
        <name>Zn(2+)</name>
        <dbReference type="ChEBI" id="CHEBI:29105"/>
    </ligand>
</feature>
<feature type="binding site" evidence="1">
    <location>
        <position position="245"/>
    </location>
    <ligand>
        <name>Zn(2+)</name>
        <dbReference type="ChEBI" id="CHEBI:29105"/>
    </ligand>
</feature>
<feature type="binding site" evidence="1">
    <location>
        <position position="281"/>
    </location>
    <ligand>
        <name>ATP</name>
        <dbReference type="ChEBI" id="CHEBI:30616"/>
    </ligand>
</feature>
<proteinExistence type="inferred from homology"/>
<reference key="1">
    <citation type="journal article" date="2009" name="Appl. Environ. Microbiol.">
        <title>Complete genome sequence of the chemolithoautotrophic marine magnetotactic coccus strain MC-1.</title>
        <authorList>
            <person name="Schubbe S."/>
            <person name="Williams T.J."/>
            <person name="Xie G."/>
            <person name="Kiss H.E."/>
            <person name="Brettin T.S."/>
            <person name="Martinez D."/>
            <person name="Ross C.A."/>
            <person name="Schuler D."/>
            <person name="Cox B.L."/>
            <person name="Nealson K.H."/>
            <person name="Bazylinski D.A."/>
        </authorList>
    </citation>
    <scope>NUCLEOTIDE SEQUENCE [LARGE SCALE GENOMIC DNA]</scope>
    <source>
        <strain>ATCC BAA-1437 / JCM 17883 / MC-1</strain>
    </source>
</reference>
<sequence length="490" mass="54216">MINKENSVGITIYNTLGRKKEPFVPMIPGKVGMYVCGVTVYDYSHIGHARVMVVFDVIARHLRVTGFDLTYVRNFTDIDDKIIKRANERGESIQTLTQRYIDAFHQDMAALGVQPADIEPKATEHLPEMMQMIGTLMDKGVAYASGGDVYYAVERFANYGQLSGKVLDEQEAGARVEVDSNKQNPMDFVLWKGAKPEEPQWDSPWGAGRPGWHIECSAMGTKYLGASFDIHGGGRDLIFPHHENEIAQTEGCTGQHAVNYWIHNGFVNVVNEEGESEKMSKSLGNFHTIRDLLALYPGEVLRFFILNSHYRSPLDFSFSLLEAAKAGLDRIYTALRSAQALLGKLPGTPIGEPADVPAGAPQDLVENYLKAMDDDFNTPQAIAFLFEAAKMLNTAISEQKDPAVIATWARLIRGLGHHLGLAGQDPELWFRSGIGAEQGLQAEAIEALIAERSAARAAKNWAESDRIRDTLAQQGIVLEDGQHGTQWSRK</sequence>
<dbReference type="EC" id="6.1.1.16" evidence="1"/>
<dbReference type="EMBL" id="CP000471">
    <property type="protein sequence ID" value="ABK42941.1"/>
    <property type="molecule type" value="Genomic_DNA"/>
</dbReference>
<dbReference type="RefSeq" id="WP_011712111.1">
    <property type="nucleotide sequence ID" value="NC_008576.1"/>
</dbReference>
<dbReference type="SMR" id="A0L4P8"/>
<dbReference type="STRING" id="156889.Mmc1_0415"/>
<dbReference type="KEGG" id="mgm:Mmc1_0415"/>
<dbReference type="eggNOG" id="COG0215">
    <property type="taxonomic scope" value="Bacteria"/>
</dbReference>
<dbReference type="HOGENOM" id="CLU_013528_0_1_5"/>
<dbReference type="OrthoDB" id="9815130at2"/>
<dbReference type="Proteomes" id="UP000002586">
    <property type="component" value="Chromosome"/>
</dbReference>
<dbReference type="GO" id="GO:0005829">
    <property type="term" value="C:cytosol"/>
    <property type="evidence" value="ECO:0007669"/>
    <property type="project" value="TreeGrafter"/>
</dbReference>
<dbReference type="GO" id="GO:0005524">
    <property type="term" value="F:ATP binding"/>
    <property type="evidence" value="ECO:0007669"/>
    <property type="project" value="UniProtKB-UniRule"/>
</dbReference>
<dbReference type="GO" id="GO:0004817">
    <property type="term" value="F:cysteine-tRNA ligase activity"/>
    <property type="evidence" value="ECO:0007669"/>
    <property type="project" value="UniProtKB-UniRule"/>
</dbReference>
<dbReference type="GO" id="GO:0008270">
    <property type="term" value="F:zinc ion binding"/>
    <property type="evidence" value="ECO:0007669"/>
    <property type="project" value="UniProtKB-UniRule"/>
</dbReference>
<dbReference type="GO" id="GO:0006423">
    <property type="term" value="P:cysteinyl-tRNA aminoacylation"/>
    <property type="evidence" value="ECO:0007669"/>
    <property type="project" value="UniProtKB-UniRule"/>
</dbReference>
<dbReference type="CDD" id="cd07963">
    <property type="entry name" value="Anticodon_Ia_Cys"/>
    <property type="match status" value="1"/>
</dbReference>
<dbReference type="CDD" id="cd00672">
    <property type="entry name" value="CysRS_core"/>
    <property type="match status" value="1"/>
</dbReference>
<dbReference type="FunFam" id="3.40.50.620:FF:000009">
    <property type="entry name" value="Cysteine--tRNA ligase"/>
    <property type="match status" value="1"/>
</dbReference>
<dbReference type="Gene3D" id="1.20.120.1910">
    <property type="entry name" value="Cysteine-tRNA ligase, C-terminal anti-codon recognition domain"/>
    <property type="match status" value="1"/>
</dbReference>
<dbReference type="Gene3D" id="3.40.50.620">
    <property type="entry name" value="HUPs"/>
    <property type="match status" value="1"/>
</dbReference>
<dbReference type="HAMAP" id="MF_00041">
    <property type="entry name" value="Cys_tRNA_synth"/>
    <property type="match status" value="1"/>
</dbReference>
<dbReference type="InterPro" id="IPR015803">
    <property type="entry name" value="Cys-tRNA-ligase"/>
</dbReference>
<dbReference type="InterPro" id="IPR015273">
    <property type="entry name" value="Cys-tRNA-synt_Ia_DALR"/>
</dbReference>
<dbReference type="InterPro" id="IPR024909">
    <property type="entry name" value="Cys-tRNA/MSH_ligase"/>
</dbReference>
<dbReference type="InterPro" id="IPR056411">
    <property type="entry name" value="CysS_C"/>
</dbReference>
<dbReference type="InterPro" id="IPR014729">
    <property type="entry name" value="Rossmann-like_a/b/a_fold"/>
</dbReference>
<dbReference type="InterPro" id="IPR032678">
    <property type="entry name" value="tRNA-synt_1_cat_dom"/>
</dbReference>
<dbReference type="InterPro" id="IPR009080">
    <property type="entry name" value="tRNAsynth_Ia_anticodon-bd"/>
</dbReference>
<dbReference type="NCBIfam" id="TIGR00435">
    <property type="entry name" value="cysS"/>
    <property type="match status" value="1"/>
</dbReference>
<dbReference type="PANTHER" id="PTHR10890:SF3">
    <property type="entry name" value="CYSTEINE--TRNA LIGASE, CYTOPLASMIC"/>
    <property type="match status" value="1"/>
</dbReference>
<dbReference type="PANTHER" id="PTHR10890">
    <property type="entry name" value="CYSTEINYL-TRNA SYNTHETASE"/>
    <property type="match status" value="1"/>
</dbReference>
<dbReference type="Pfam" id="PF23493">
    <property type="entry name" value="CysS_C"/>
    <property type="match status" value="1"/>
</dbReference>
<dbReference type="Pfam" id="PF09190">
    <property type="entry name" value="DALR_2"/>
    <property type="match status" value="1"/>
</dbReference>
<dbReference type="Pfam" id="PF01406">
    <property type="entry name" value="tRNA-synt_1e"/>
    <property type="match status" value="1"/>
</dbReference>
<dbReference type="PRINTS" id="PR00983">
    <property type="entry name" value="TRNASYNTHCYS"/>
</dbReference>
<dbReference type="SMART" id="SM00840">
    <property type="entry name" value="DALR_2"/>
    <property type="match status" value="1"/>
</dbReference>
<dbReference type="SUPFAM" id="SSF47323">
    <property type="entry name" value="Anticodon-binding domain of a subclass of class I aminoacyl-tRNA synthetases"/>
    <property type="match status" value="1"/>
</dbReference>
<dbReference type="SUPFAM" id="SSF52374">
    <property type="entry name" value="Nucleotidylyl transferase"/>
    <property type="match status" value="1"/>
</dbReference>
<evidence type="ECO:0000255" key="1">
    <source>
        <dbReference type="HAMAP-Rule" id="MF_00041"/>
    </source>
</evidence>
<comment type="catalytic activity">
    <reaction evidence="1">
        <text>tRNA(Cys) + L-cysteine + ATP = L-cysteinyl-tRNA(Cys) + AMP + diphosphate</text>
        <dbReference type="Rhea" id="RHEA:17773"/>
        <dbReference type="Rhea" id="RHEA-COMP:9661"/>
        <dbReference type="Rhea" id="RHEA-COMP:9679"/>
        <dbReference type="ChEBI" id="CHEBI:30616"/>
        <dbReference type="ChEBI" id="CHEBI:33019"/>
        <dbReference type="ChEBI" id="CHEBI:35235"/>
        <dbReference type="ChEBI" id="CHEBI:78442"/>
        <dbReference type="ChEBI" id="CHEBI:78517"/>
        <dbReference type="ChEBI" id="CHEBI:456215"/>
        <dbReference type="EC" id="6.1.1.16"/>
    </reaction>
</comment>
<comment type="cofactor">
    <cofactor evidence="1">
        <name>Zn(2+)</name>
        <dbReference type="ChEBI" id="CHEBI:29105"/>
    </cofactor>
    <text evidence="1">Binds 1 zinc ion per subunit.</text>
</comment>
<comment type="subunit">
    <text evidence="1">Monomer.</text>
</comment>
<comment type="subcellular location">
    <subcellularLocation>
        <location evidence="1">Cytoplasm</location>
    </subcellularLocation>
</comment>
<comment type="similarity">
    <text evidence="1">Belongs to the class-I aminoacyl-tRNA synthetase family.</text>
</comment>